<keyword id="KW-1185">Reference proteome</keyword>
<protein>
    <recommendedName>
        <fullName>Uncharacterized protein YicS</fullName>
    </recommendedName>
</protein>
<evidence type="ECO:0000305" key="1"/>
<name>YICS_ECOL6</name>
<organism>
    <name type="scientific">Escherichia coli O6:H1 (strain CFT073 / ATCC 700928 / UPEC)</name>
    <dbReference type="NCBI Taxonomy" id="199310"/>
    <lineage>
        <taxon>Bacteria</taxon>
        <taxon>Pseudomonadati</taxon>
        <taxon>Pseudomonadota</taxon>
        <taxon>Gammaproteobacteria</taxon>
        <taxon>Enterobacterales</taxon>
        <taxon>Enterobacteriaceae</taxon>
        <taxon>Escherichia</taxon>
    </lineage>
</organism>
<comment type="sequence caution" evidence="1">
    <conflict type="erroneous initiation">
        <sequence resource="EMBL-CDS" id="AAN83019"/>
    </conflict>
</comment>
<reference key="1">
    <citation type="journal article" date="2002" name="Proc. Natl. Acad. Sci. U.S.A.">
        <title>Extensive mosaic structure revealed by the complete genome sequence of uropathogenic Escherichia coli.</title>
        <authorList>
            <person name="Welch R.A."/>
            <person name="Burland V."/>
            <person name="Plunkett G. III"/>
            <person name="Redford P."/>
            <person name="Roesch P."/>
            <person name="Rasko D."/>
            <person name="Buckles E.L."/>
            <person name="Liou S.-R."/>
            <person name="Boutin A."/>
            <person name="Hackett J."/>
            <person name="Stroud D."/>
            <person name="Mayhew G.F."/>
            <person name="Rose D.J."/>
            <person name="Zhou S."/>
            <person name="Schwartz D.C."/>
            <person name="Perna N.T."/>
            <person name="Mobley H.L.T."/>
            <person name="Donnenberg M.S."/>
            <person name="Blattner F.R."/>
        </authorList>
    </citation>
    <scope>NUCLEOTIDE SEQUENCE [LARGE SCALE GENOMIC DNA]</scope>
    <source>
        <strain>CFT073 / ATCC 700928 / UPEC</strain>
    </source>
</reference>
<proteinExistence type="predicted"/>
<feature type="chain" id="PRO_0000262296" description="Uncharacterized protein YicS">
    <location>
        <begin position="1"/>
        <end position="97"/>
    </location>
</feature>
<dbReference type="EMBL" id="AE014075">
    <property type="protein sequence ID" value="AAN83019.1"/>
    <property type="status" value="ALT_INIT"/>
    <property type="molecule type" value="Genomic_DNA"/>
</dbReference>
<dbReference type="RefSeq" id="WP_001297978.1">
    <property type="nucleotide sequence ID" value="NZ_CP051263.1"/>
</dbReference>
<dbReference type="SMR" id="Q8FBY0"/>
<dbReference type="STRING" id="199310.c4585"/>
<dbReference type="KEGG" id="ecc:c4585"/>
<dbReference type="eggNOG" id="ENOG5032TQY">
    <property type="taxonomic scope" value="Bacteria"/>
</dbReference>
<dbReference type="HOGENOM" id="CLU_159877_2_0_6"/>
<dbReference type="PHI-base" id="PHI:8247"/>
<dbReference type="Proteomes" id="UP000001410">
    <property type="component" value="Chromosome"/>
</dbReference>
<dbReference type="InterPro" id="IPR048144">
    <property type="entry name" value="YicS_fam"/>
</dbReference>
<dbReference type="NCBIfam" id="NF041639">
    <property type="entry name" value="YicS_fam"/>
    <property type="match status" value="1"/>
</dbReference>
<sequence length="97" mass="11061">MKPTMLLMITVFLIFPAISQAESPFSSLQSAKEKTTVLQDLRKICTPQASLSDEAWEKLMLSDENNKQHIREAIVAMERNNQSNYWEALGKVECPDM</sequence>
<gene>
    <name type="primary">yicS</name>
    <name type="ordered locus">c4585</name>
</gene>
<accession>Q8FBY0</accession>